<evidence type="ECO:0000255" key="1">
    <source>
        <dbReference type="HAMAP-Rule" id="MF_00015"/>
    </source>
</evidence>
<evidence type="ECO:0000305" key="2"/>
<feature type="chain" id="PRO_0000170014" description="LexA repressor">
    <location>
        <begin position="1"/>
        <end position="216"/>
    </location>
</feature>
<feature type="DNA-binding region" description="H-T-H motif" evidence="1">
    <location>
        <begin position="29"/>
        <end position="49"/>
    </location>
</feature>
<feature type="active site" description="For autocatalytic cleavage activity" evidence="1">
    <location>
        <position position="134"/>
    </location>
</feature>
<feature type="active site" description="For autocatalytic cleavage activity" evidence="1">
    <location>
        <position position="171"/>
    </location>
</feature>
<feature type="site" description="Cleavage; by autolysis" evidence="1">
    <location>
        <begin position="99"/>
        <end position="100"/>
    </location>
</feature>
<accession>Q7WCK0</accession>
<reference key="1">
    <citation type="journal article" date="2003" name="Nat. Genet.">
        <title>Comparative analysis of the genome sequences of Bordetella pertussis, Bordetella parapertussis and Bordetella bronchiseptica.</title>
        <authorList>
            <person name="Parkhill J."/>
            <person name="Sebaihia M."/>
            <person name="Preston A."/>
            <person name="Murphy L.D."/>
            <person name="Thomson N.R."/>
            <person name="Harris D.E."/>
            <person name="Holden M.T.G."/>
            <person name="Churcher C.M."/>
            <person name="Bentley S.D."/>
            <person name="Mungall K.L."/>
            <person name="Cerdeno-Tarraga A.-M."/>
            <person name="Temple L."/>
            <person name="James K.D."/>
            <person name="Harris B."/>
            <person name="Quail M.A."/>
            <person name="Achtman M."/>
            <person name="Atkin R."/>
            <person name="Baker S."/>
            <person name="Basham D."/>
            <person name="Bason N."/>
            <person name="Cherevach I."/>
            <person name="Chillingworth T."/>
            <person name="Collins M."/>
            <person name="Cronin A."/>
            <person name="Davis P."/>
            <person name="Doggett J."/>
            <person name="Feltwell T."/>
            <person name="Goble A."/>
            <person name="Hamlin N."/>
            <person name="Hauser H."/>
            <person name="Holroyd S."/>
            <person name="Jagels K."/>
            <person name="Leather S."/>
            <person name="Moule S."/>
            <person name="Norberczak H."/>
            <person name="O'Neil S."/>
            <person name="Ormond D."/>
            <person name="Price C."/>
            <person name="Rabbinowitsch E."/>
            <person name="Rutter S."/>
            <person name="Sanders M."/>
            <person name="Saunders D."/>
            <person name="Seeger K."/>
            <person name="Sharp S."/>
            <person name="Simmonds M."/>
            <person name="Skelton J."/>
            <person name="Squares R."/>
            <person name="Squares S."/>
            <person name="Stevens K."/>
            <person name="Unwin L."/>
            <person name="Whitehead S."/>
            <person name="Barrell B.G."/>
            <person name="Maskell D.J."/>
        </authorList>
    </citation>
    <scope>NUCLEOTIDE SEQUENCE [LARGE SCALE GENOMIC DNA]</scope>
    <source>
        <strain>ATCC BAA-588 / NCTC 13252 / RB50</strain>
    </source>
</reference>
<gene>
    <name evidence="1" type="primary">lexA</name>
    <name type="ordered locus">BB2271</name>
</gene>
<keyword id="KW-0068">Autocatalytic cleavage</keyword>
<keyword id="KW-0227">DNA damage</keyword>
<keyword id="KW-0234">DNA repair</keyword>
<keyword id="KW-0235">DNA replication</keyword>
<keyword id="KW-0238">DNA-binding</keyword>
<keyword id="KW-0378">Hydrolase</keyword>
<keyword id="KW-0678">Repressor</keyword>
<keyword id="KW-0742">SOS response</keyword>
<keyword id="KW-0804">Transcription</keyword>
<keyword id="KW-0805">Transcription regulation</keyword>
<organism>
    <name type="scientific">Bordetella bronchiseptica (strain ATCC BAA-588 / NCTC 13252 / RB50)</name>
    <name type="common">Alcaligenes bronchisepticus</name>
    <dbReference type="NCBI Taxonomy" id="257310"/>
    <lineage>
        <taxon>Bacteria</taxon>
        <taxon>Pseudomonadati</taxon>
        <taxon>Pseudomonadota</taxon>
        <taxon>Betaproteobacteria</taxon>
        <taxon>Burkholderiales</taxon>
        <taxon>Alcaligenaceae</taxon>
        <taxon>Bordetella</taxon>
    </lineage>
</organism>
<sequence>MATKLTERQQEILDLIRQTVARTGFPPTRAEIAQALGFRSPNAAEDHLKALARKGAIELTAGASRGIRLKVPDSATPSAQLTHPLLAQLVLPLVGRVAAGSPILASEHVEREVGVDPGLFAQTPDYLLKVRGMSMRDAGILEGDLLAVKRAAEARNGQIVVARLGDEVTVKRLQRQNGRIELLPENPDFAPIVVANTDEFALEGIAVGLIRTQPLH</sequence>
<protein>
    <recommendedName>
        <fullName evidence="1">LexA repressor</fullName>
        <ecNumber evidence="1">3.4.21.88</ecNumber>
    </recommendedName>
</protein>
<comment type="function">
    <text evidence="1">Represses a number of genes involved in the response to DNA damage (SOS response), including recA and lexA. In the presence of single-stranded DNA, RecA interacts with LexA causing an autocatalytic cleavage which disrupts the DNA-binding part of LexA, leading to derepression of the SOS regulon and eventually DNA repair.</text>
</comment>
<comment type="catalytic activity">
    <reaction evidence="1">
        <text>Hydrolysis of Ala-|-Gly bond in repressor LexA.</text>
        <dbReference type="EC" id="3.4.21.88"/>
    </reaction>
</comment>
<comment type="subunit">
    <text evidence="1">Homodimer.</text>
</comment>
<comment type="similarity">
    <text evidence="1">Belongs to the peptidase S24 family.</text>
</comment>
<comment type="sequence caution" evidence="2">
    <conflict type="erroneous initiation">
        <sequence resource="EMBL-CDS" id="CAE32767"/>
    </conflict>
</comment>
<name>LEXA_BORBR</name>
<proteinExistence type="inferred from homology"/>
<dbReference type="EC" id="3.4.21.88" evidence="1"/>
<dbReference type="EMBL" id="BX640443">
    <property type="protein sequence ID" value="CAE32767.1"/>
    <property type="status" value="ALT_INIT"/>
    <property type="molecule type" value="Genomic_DNA"/>
</dbReference>
<dbReference type="RefSeq" id="WP_010930566.1">
    <property type="nucleotide sequence ID" value="NC_002927.3"/>
</dbReference>
<dbReference type="SMR" id="Q7WCK0"/>
<dbReference type="MEROPS" id="S24.001"/>
<dbReference type="GeneID" id="69602029"/>
<dbReference type="KEGG" id="bbr:BB2271"/>
<dbReference type="eggNOG" id="COG1974">
    <property type="taxonomic scope" value="Bacteria"/>
</dbReference>
<dbReference type="HOGENOM" id="CLU_066192_45_3_4"/>
<dbReference type="Proteomes" id="UP000001027">
    <property type="component" value="Chromosome"/>
</dbReference>
<dbReference type="GO" id="GO:0003677">
    <property type="term" value="F:DNA binding"/>
    <property type="evidence" value="ECO:0007669"/>
    <property type="project" value="UniProtKB-UniRule"/>
</dbReference>
<dbReference type="GO" id="GO:0004252">
    <property type="term" value="F:serine-type endopeptidase activity"/>
    <property type="evidence" value="ECO:0007669"/>
    <property type="project" value="UniProtKB-UniRule"/>
</dbReference>
<dbReference type="GO" id="GO:0006281">
    <property type="term" value="P:DNA repair"/>
    <property type="evidence" value="ECO:0007669"/>
    <property type="project" value="UniProtKB-UniRule"/>
</dbReference>
<dbReference type="GO" id="GO:0006260">
    <property type="term" value="P:DNA replication"/>
    <property type="evidence" value="ECO:0007669"/>
    <property type="project" value="UniProtKB-UniRule"/>
</dbReference>
<dbReference type="GO" id="GO:0045892">
    <property type="term" value="P:negative regulation of DNA-templated transcription"/>
    <property type="evidence" value="ECO:0007669"/>
    <property type="project" value="UniProtKB-UniRule"/>
</dbReference>
<dbReference type="GO" id="GO:0006508">
    <property type="term" value="P:proteolysis"/>
    <property type="evidence" value="ECO:0007669"/>
    <property type="project" value="InterPro"/>
</dbReference>
<dbReference type="GO" id="GO:0009432">
    <property type="term" value="P:SOS response"/>
    <property type="evidence" value="ECO:0007669"/>
    <property type="project" value="UniProtKB-UniRule"/>
</dbReference>
<dbReference type="CDD" id="cd06529">
    <property type="entry name" value="S24_LexA-like"/>
    <property type="match status" value="1"/>
</dbReference>
<dbReference type="FunFam" id="1.10.10.10:FF:000009">
    <property type="entry name" value="LexA repressor"/>
    <property type="match status" value="1"/>
</dbReference>
<dbReference type="FunFam" id="2.10.109.10:FF:000001">
    <property type="entry name" value="LexA repressor"/>
    <property type="match status" value="1"/>
</dbReference>
<dbReference type="Gene3D" id="2.10.109.10">
    <property type="entry name" value="Umud Fragment, subunit A"/>
    <property type="match status" value="1"/>
</dbReference>
<dbReference type="Gene3D" id="1.10.10.10">
    <property type="entry name" value="Winged helix-like DNA-binding domain superfamily/Winged helix DNA-binding domain"/>
    <property type="match status" value="1"/>
</dbReference>
<dbReference type="HAMAP" id="MF_00015">
    <property type="entry name" value="LexA"/>
    <property type="match status" value="1"/>
</dbReference>
<dbReference type="InterPro" id="IPR006200">
    <property type="entry name" value="LexA"/>
</dbReference>
<dbReference type="InterPro" id="IPR039418">
    <property type="entry name" value="LexA-like"/>
</dbReference>
<dbReference type="InterPro" id="IPR036286">
    <property type="entry name" value="LexA/Signal_pep-like_sf"/>
</dbReference>
<dbReference type="InterPro" id="IPR006199">
    <property type="entry name" value="LexA_DNA-bd_dom"/>
</dbReference>
<dbReference type="InterPro" id="IPR050077">
    <property type="entry name" value="LexA_repressor"/>
</dbReference>
<dbReference type="InterPro" id="IPR006197">
    <property type="entry name" value="Peptidase_S24_LexA"/>
</dbReference>
<dbReference type="InterPro" id="IPR015927">
    <property type="entry name" value="Peptidase_S24_S26A/B/C"/>
</dbReference>
<dbReference type="InterPro" id="IPR036388">
    <property type="entry name" value="WH-like_DNA-bd_sf"/>
</dbReference>
<dbReference type="InterPro" id="IPR036390">
    <property type="entry name" value="WH_DNA-bd_sf"/>
</dbReference>
<dbReference type="NCBIfam" id="TIGR00498">
    <property type="entry name" value="lexA"/>
    <property type="match status" value="1"/>
</dbReference>
<dbReference type="PANTHER" id="PTHR33516">
    <property type="entry name" value="LEXA REPRESSOR"/>
    <property type="match status" value="1"/>
</dbReference>
<dbReference type="PANTHER" id="PTHR33516:SF2">
    <property type="entry name" value="LEXA REPRESSOR-RELATED"/>
    <property type="match status" value="1"/>
</dbReference>
<dbReference type="Pfam" id="PF01726">
    <property type="entry name" value="LexA_DNA_bind"/>
    <property type="match status" value="1"/>
</dbReference>
<dbReference type="Pfam" id="PF00717">
    <property type="entry name" value="Peptidase_S24"/>
    <property type="match status" value="1"/>
</dbReference>
<dbReference type="PRINTS" id="PR00726">
    <property type="entry name" value="LEXASERPTASE"/>
</dbReference>
<dbReference type="SUPFAM" id="SSF51306">
    <property type="entry name" value="LexA/Signal peptidase"/>
    <property type="match status" value="1"/>
</dbReference>
<dbReference type="SUPFAM" id="SSF46785">
    <property type="entry name" value="Winged helix' DNA-binding domain"/>
    <property type="match status" value="1"/>
</dbReference>